<accession>A5UFQ9</accession>
<gene>
    <name evidence="1" type="primary">htpG</name>
    <name type="ordered locus">CGSHiGG_03065</name>
</gene>
<sequence>MSQNQETRGFQSEVKQLLQLMIHSLYSNKEIFLRELISNASDAADKLRFKALSNPALYEGDGDLRVRVSFDADKGIITISDNGIGMTREQVIDHLGTIAKSGTKEFLTALGQDQAKNSQLIGQFGVGFYSAFIVADKVTVKTRAAGEEADKAVLWESAGEGEYSVADIEKKSRGTDVILHLREDEKEFLNEWRLREIIGKYSDHIGLPVEMLTKEYDDEGKECGEKWEKINKSDALWTRSKNDVSDEEYKAFYKHLSHDFSDPVTWAHNKVEGNQAYTSLLYVPAKAPWDLFNREHKHGLKLYVQRVFIMDDAEQFMPNYLRFMRGLIDSNDLPLNVSREILQDNKITAALRKALTKRSLQMLEKLAKDDAEKYLQFWKEFGLVLKEGPAEDFANKETIAKLLRFASTHNDGCEQTVSLEDYILRMKEGQKAIYYITADSYVAAKNSPHLELFNKKGIEVLLLSDRIDEWMLSYLTEFDGKQLQSITKADLDLGDLADKESETQKQRDEAFGSFIERVKNLLGERVKTVRLTHNLTDTPAVVSTDNDQMTTQMAKLFAAAGQPVPEVKYTFELNPEHHLVKKVADIADEIEFADWVELLLEQAMLAERGSLENPAAFIKRINKLLG</sequence>
<evidence type="ECO:0000255" key="1">
    <source>
        <dbReference type="HAMAP-Rule" id="MF_00505"/>
    </source>
</evidence>
<proteinExistence type="inferred from homology"/>
<dbReference type="EMBL" id="CP000672">
    <property type="protein sequence ID" value="ABQ99614.1"/>
    <property type="molecule type" value="Genomic_DNA"/>
</dbReference>
<dbReference type="SMR" id="A5UFQ9"/>
<dbReference type="KEGG" id="hiq:CGSHiGG_03065"/>
<dbReference type="HOGENOM" id="CLU_006684_3_0_6"/>
<dbReference type="Proteomes" id="UP000001990">
    <property type="component" value="Chromosome"/>
</dbReference>
<dbReference type="GO" id="GO:0005737">
    <property type="term" value="C:cytoplasm"/>
    <property type="evidence" value="ECO:0007669"/>
    <property type="project" value="UniProtKB-SubCell"/>
</dbReference>
<dbReference type="GO" id="GO:0005524">
    <property type="term" value="F:ATP binding"/>
    <property type="evidence" value="ECO:0007669"/>
    <property type="project" value="UniProtKB-UniRule"/>
</dbReference>
<dbReference type="GO" id="GO:0016887">
    <property type="term" value="F:ATP hydrolysis activity"/>
    <property type="evidence" value="ECO:0007669"/>
    <property type="project" value="InterPro"/>
</dbReference>
<dbReference type="GO" id="GO:0140662">
    <property type="term" value="F:ATP-dependent protein folding chaperone"/>
    <property type="evidence" value="ECO:0007669"/>
    <property type="project" value="InterPro"/>
</dbReference>
<dbReference type="GO" id="GO:0051082">
    <property type="term" value="F:unfolded protein binding"/>
    <property type="evidence" value="ECO:0007669"/>
    <property type="project" value="UniProtKB-UniRule"/>
</dbReference>
<dbReference type="CDD" id="cd16927">
    <property type="entry name" value="HATPase_Hsp90-like"/>
    <property type="match status" value="1"/>
</dbReference>
<dbReference type="FunFam" id="1.20.120.790:FF:000002">
    <property type="entry name" value="Molecular chaperone HtpG"/>
    <property type="match status" value="1"/>
</dbReference>
<dbReference type="FunFam" id="3.30.230.80:FF:000002">
    <property type="entry name" value="Molecular chaperone HtpG"/>
    <property type="match status" value="1"/>
</dbReference>
<dbReference type="FunFam" id="3.30.565.10:FF:000009">
    <property type="entry name" value="Molecular chaperone HtpG"/>
    <property type="match status" value="1"/>
</dbReference>
<dbReference type="FunFam" id="3.40.50.11260:FF:000002">
    <property type="entry name" value="Molecular chaperone HtpG"/>
    <property type="match status" value="1"/>
</dbReference>
<dbReference type="Gene3D" id="3.30.230.80">
    <property type="match status" value="1"/>
</dbReference>
<dbReference type="Gene3D" id="3.40.50.11260">
    <property type="match status" value="1"/>
</dbReference>
<dbReference type="Gene3D" id="1.20.120.790">
    <property type="entry name" value="Heat shock protein 90, C-terminal domain"/>
    <property type="match status" value="1"/>
</dbReference>
<dbReference type="Gene3D" id="3.30.565.10">
    <property type="entry name" value="Histidine kinase-like ATPase, C-terminal domain"/>
    <property type="match status" value="1"/>
</dbReference>
<dbReference type="HAMAP" id="MF_00505">
    <property type="entry name" value="HSP90"/>
    <property type="match status" value="1"/>
</dbReference>
<dbReference type="InterPro" id="IPR036890">
    <property type="entry name" value="HATPase_C_sf"/>
</dbReference>
<dbReference type="InterPro" id="IPR019805">
    <property type="entry name" value="Heat_shock_protein_90_CS"/>
</dbReference>
<dbReference type="InterPro" id="IPR037196">
    <property type="entry name" value="HSP90_C"/>
</dbReference>
<dbReference type="InterPro" id="IPR001404">
    <property type="entry name" value="Hsp90_fam"/>
</dbReference>
<dbReference type="InterPro" id="IPR020575">
    <property type="entry name" value="Hsp90_N"/>
</dbReference>
<dbReference type="InterPro" id="IPR020568">
    <property type="entry name" value="Ribosomal_Su5_D2-typ_SF"/>
</dbReference>
<dbReference type="NCBIfam" id="NF003555">
    <property type="entry name" value="PRK05218.1"/>
    <property type="match status" value="1"/>
</dbReference>
<dbReference type="PANTHER" id="PTHR11528">
    <property type="entry name" value="HEAT SHOCK PROTEIN 90 FAMILY MEMBER"/>
    <property type="match status" value="1"/>
</dbReference>
<dbReference type="Pfam" id="PF13589">
    <property type="entry name" value="HATPase_c_3"/>
    <property type="match status" value="1"/>
</dbReference>
<dbReference type="Pfam" id="PF00183">
    <property type="entry name" value="HSP90"/>
    <property type="match status" value="1"/>
</dbReference>
<dbReference type="PIRSF" id="PIRSF002583">
    <property type="entry name" value="Hsp90"/>
    <property type="match status" value="1"/>
</dbReference>
<dbReference type="PRINTS" id="PR00775">
    <property type="entry name" value="HEATSHOCK90"/>
</dbReference>
<dbReference type="SMART" id="SM00387">
    <property type="entry name" value="HATPase_c"/>
    <property type="match status" value="1"/>
</dbReference>
<dbReference type="SUPFAM" id="SSF55874">
    <property type="entry name" value="ATPase domain of HSP90 chaperone/DNA topoisomerase II/histidine kinase"/>
    <property type="match status" value="1"/>
</dbReference>
<dbReference type="SUPFAM" id="SSF110942">
    <property type="entry name" value="HSP90 C-terminal domain"/>
    <property type="match status" value="1"/>
</dbReference>
<dbReference type="SUPFAM" id="SSF54211">
    <property type="entry name" value="Ribosomal protein S5 domain 2-like"/>
    <property type="match status" value="1"/>
</dbReference>
<dbReference type="PROSITE" id="PS00298">
    <property type="entry name" value="HSP90"/>
    <property type="match status" value="1"/>
</dbReference>
<organism>
    <name type="scientific">Haemophilus influenzae (strain PittGG)</name>
    <dbReference type="NCBI Taxonomy" id="374931"/>
    <lineage>
        <taxon>Bacteria</taxon>
        <taxon>Pseudomonadati</taxon>
        <taxon>Pseudomonadota</taxon>
        <taxon>Gammaproteobacteria</taxon>
        <taxon>Pasteurellales</taxon>
        <taxon>Pasteurellaceae</taxon>
        <taxon>Haemophilus</taxon>
    </lineage>
</organism>
<keyword id="KW-0067">ATP-binding</keyword>
<keyword id="KW-0143">Chaperone</keyword>
<keyword id="KW-0963">Cytoplasm</keyword>
<keyword id="KW-0547">Nucleotide-binding</keyword>
<keyword id="KW-0346">Stress response</keyword>
<protein>
    <recommendedName>
        <fullName evidence="1">Chaperone protein HtpG</fullName>
    </recommendedName>
    <alternativeName>
        <fullName evidence="1">Heat shock protein HtpG</fullName>
    </alternativeName>
    <alternativeName>
        <fullName evidence="1">High temperature protein G</fullName>
    </alternativeName>
</protein>
<reference key="1">
    <citation type="journal article" date="2007" name="Genome Biol.">
        <title>Characterization and modeling of the Haemophilus influenzae core and supragenomes based on the complete genomic sequences of Rd and 12 clinical nontypeable strains.</title>
        <authorList>
            <person name="Hogg J.S."/>
            <person name="Hu F.Z."/>
            <person name="Janto B."/>
            <person name="Boissy R."/>
            <person name="Hayes J."/>
            <person name="Keefe R."/>
            <person name="Post J.C."/>
            <person name="Ehrlich G.D."/>
        </authorList>
    </citation>
    <scope>NUCLEOTIDE SEQUENCE [LARGE SCALE GENOMIC DNA]</scope>
    <source>
        <strain>PittGG</strain>
    </source>
</reference>
<name>HTPG_HAEIG</name>
<feature type="chain" id="PRO_1000014921" description="Chaperone protein HtpG">
    <location>
        <begin position="1"/>
        <end position="626"/>
    </location>
</feature>
<feature type="region of interest" description="A; substrate-binding" evidence="1">
    <location>
        <begin position="1"/>
        <end position="339"/>
    </location>
</feature>
<feature type="region of interest" description="B" evidence="1">
    <location>
        <begin position="340"/>
        <end position="555"/>
    </location>
</feature>
<feature type="region of interest" description="C" evidence="1">
    <location>
        <begin position="556"/>
        <end position="626"/>
    </location>
</feature>
<comment type="function">
    <text evidence="1">Molecular chaperone. Has ATPase activity.</text>
</comment>
<comment type="subunit">
    <text evidence="1">Homodimer.</text>
</comment>
<comment type="subcellular location">
    <subcellularLocation>
        <location evidence="1">Cytoplasm</location>
    </subcellularLocation>
</comment>
<comment type="similarity">
    <text evidence="1">Belongs to the heat shock protein 90 family.</text>
</comment>